<protein>
    <recommendedName>
        <fullName evidence="1">CTP synthase</fullName>
        <ecNumber evidence="1">6.3.4.2</ecNumber>
    </recommendedName>
    <alternativeName>
        <fullName evidence="1">Cytidine 5'-triphosphate synthase</fullName>
    </alternativeName>
    <alternativeName>
        <fullName evidence="1">Cytidine triphosphate synthetase</fullName>
        <shortName evidence="1">CTP synthetase</shortName>
        <shortName evidence="1">CTPS</shortName>
    </alternativeName>
    <alternativeName>
        <fullName evidence="1">UTP--ammonia ligase</fullName>
    </alternativeName>
</protein>
<organism>
    <name type="scientific">Cereibacter sphaeroides (strain ATCC 17025 / ATH 2.4.3)</name>
    <name type="common">Rhodobacter sphaeroides</name>
    <dbReference type="NCBI Taxonomy" id="349102"/>
    <lineage>
        <taxon>Bacteria</taxon>
        <taxon>Pseudomonadati</taxon>
        <taxon>Pseudomonadota</taxon>
        <taxon>Alphaproteobacteria</taxon>
        <taxon>Rhodobacterales</taxon>
        <taxon>Paracoccaceae</taxon>
        <taxon>Cereibacter</taxon>
    </lineage>
</organism>
<accession>A4WQW2</accession>
<name>PYRG_CERS5</name>
<evidence type="ECO:0000255" key="1">
    <source>
        <dbReference type="HAMAP-Rule" id="MF_01227"/>
    </source>
</evidence>
<feature type="chain" id="PRO_1000139550" description="CTP synthase">
    <location>
        <begin position="1"/>
        <end position="547"/>
    </location>
</feature>
<feature type="domain" description="Glutamine amidotransferase type-1" evidence="1">
    <location>
        <begin position="291"/>
        <end position="546"/>
    </location>
</feature>
<feature type="region of interest" description="Amidoligase domain" evidence="1">
    <location>
        <begin position="1"/>
        <end position="265"/>
    </location>
</feature>
<feature type="active site" description="Nucleophile; for glutamine hydrolysis" evidence="1">
    <location>
        <position position="380"/>
    </location>
</feature>
<feature type="active site" evidence="1">
    <location>
        <position position="519"/>
    </location>
</feature>
<feature type="active site" evidence="1">
    <location>
        <position position="521"/>
    </location>
</feature>
<feature type="binding site" evidence="1">
    <location>
        <position position="13"/>
    </location>
    <ligand>
        <name>CTP</name>
        <dbReference type="ChEBI" id="CHEBI:37563"/>
        <note>allosteric inhibitor</note>
    </ligand>
</feature>
<feature type="binding site" evidence="1">
    <location>
        <position position="13"/>
    </location>
    <ligand>
        <name>UTP</name>
        <dbReference type="ChEBI" id="CHEBI:46398"/>
    </ligand>
</feature>
<feature type="binding site" evidence="1">
    <location>
        <begin position="14"/>
        <end position="19"/>
    </location>
    <ligand>
        <name>ATP</name>
        <dbReference type="ChEBI" id="CHEBI:30616"/>
    </ligand>
</feature>
<feature type="binding site" evidence="1">
    <location>
        <position position="71"/>
    </location>
    <ligand>
        <name>ATP</name>
        <dbReference type="ChEBI" id="CHEBI:30616"/>
    </ligand>
</feature>
<feature type="binding site" evidence="1">
    <location>
        <position position="71"/>
    </location>
    <ligand>
        <name>Mg(2+)</name>
        <dbReference type="ChEBI" id="CHEBI:18420"/>
    </ligand>
</feature>
<feature type="binding site" evidence="1">
    <location>
        <position position="139"/>
    </location>
    <ligand>
        <name>Mg(2+)</name>
        <dbReference type="ChEBI" id="CHEBI:18420"/>
    </ligand>
</feature>
<feature type="binding site" evidence="1">
    <location>
        <begin position="146"/>
        <end position="148"/>
    </location>
    <ligand>
        <name>CTP</name>
        <dbReference type="ChEBI" id="CHEBI:37563"/>
        <note>allosteric inhibitor</note>
    </ligand>
</feature>
<feature type="binding site" evidence="1">
    <location>
        <begin position="186"/>
        <end position="191"/>
    </location>
    <ligand>
        <name>CTP</name>
        <dbReference type="ChEBI" id="CHEBI:37563"/>
        <note>allosteric inhibitor</note>
    </ligand>
</feature>
<feature type="binding site" evidence="1">
    <location>
        <begin position="186"/>
        <end position="191"/>
    </location>
    <ligand>
        <name>UTP</name>
        <dbReference type="ChEBI" id="CHEBI:46398"/>
    </ligand>
</feature>
<feature type="binding site" evidence="1">
    <location>
        <position position="222"/>
    </location>
    <ligand>
        <name>CTP</name>
        <dbReference type="ChEBI" id="CHEBI:37563"/>
        <note>allosteric inhibitor</note>
    </ligand>
</feature>
<feature type="binding site" evidence="1">
    <location>
        <position position="222"/>
    </location>
    <ligand>
        <name>UTP</name>
        <dbReference type="ChEBI" id="CHEBI:46398"/>
    </ligand>
</feature>
<feature type="binding site" evidence="1">
    <location>
        <position position="353"/>
    </location>
    <ligand>
        <name>L-glutamine</name>
        <dbReference type="ChEBI" id="CHEBI:58359"/>
    </ligand>
</feature>
<feature type="binding site" evidence="1">
    <location>
        <begin position="381"/>
        <end position="384"/>
    </location>
    <ligand>
        <name>L-glutamine</name>
        <dbReference type="ChEBI" id="CHEBI:58359"/>
    </ligand>
</feature>
<feature type="binding site" evidence="1">
    <location>
        <position position="404"/>
    </location>
    <ligand>
        <name>L-glutamine</name>
        <dbReference type="ChEBI" id="CHEBI:58359"/>
    </ligand>
</feature>
<feature type="binding site" evidence="1">
    <location>
        <position position="474"/>
    </location>
    <ligand>
        <name>L-glutamine</name>
        <dbReference type="ChEBI" id="CHEBI:58359"/>
    </ligand>
</feature>
<proteinExistence type="inferred from homology"/>
<keyword id="KW-0067">ATP-binding</keyword>
<keyword id="KW-0315">Glutamine amidotransferase</keyword>
<keyword id="KW-0436">Ligase</keyword>
<keyword id="KW-0460">Magnesium</keyword>
<keyword id="KW-0479">Metal-binding</keyword>
<keyword id="KW-0547">Nucleotide-binding</keyword>
<keyword id="KW-0665">Pyrimidine biosynthesis</keyword>
<comment type="function">
    <text evidence="1">Catalyzes the ATP-dependent amination of UTP to CTP with either L-glutamine or ammonia as the source of nitrogen. Regulates intracellular CTP levels through interactions with the four ribonucleotide triphosphates.</text>
</comment>
<comment type="catalytic activity">
    <reaction evidence="1">
        <text>UTP + L-glutamine + ATP + H2O = CTP + L-glutamate + ADP + phosphate + 2 H(+)</text>
        <dbReference type="Rhea" id="RHEA:26426"/>
        <dbReference type="ChEBI" id="CHEBI:15377"/>
        <dbReference type="ChEBI" id="CHEBI:15378"/>
        <dbReference type="ChEBI" id="CHEBI:29985"/>
        <dbReference type="ChEBI" id="CHEBI:30616"/>
        <dbReference type="ChEBI" id="CHEBI:37563"/>
        <dbReference type="ChEBI" id="CHEBI:43474"/>
        <dbReference type="ChEBI" id="CHEBI:46398"/>
        <dbReference type="ChEBI" id="CHEBI:58359"/>
        <dbReference type="ChEBI" id="CHEBI:456216"/>
        <dbReference type="EC" id="6.3.4.2"/>
    </reaction>
</comment>
<comment type="catalytic activity">
    <reaction evidence="1">
        <text>L-glutamine + H2O = L-glutamate + NH4(+)</text>
        <dbReference type="Rhea" id="RHEA:15889"/>
        <dbReference type="ChEBI" id="CHEBI:15377"/>
        <dbReference type="ChEBI" id="CHEBI:28938"/>
        <dbReference type="ChEBI" id="CHEBI:29985"/>
        <dbReference type="ChEBI" id="CHEBI:58359"/>
    </reaction>
</comment>
<comment type="catalytic activity">
    <reaction evidence="1">
        <text>UTP + NH4(+) + ATP = CTP + ADP + phosphate + 2 H(+)</text>
        <dbReference type="Rhea" id="RHEA:16597"/>
        <dbReference type="ChEBI" id="CHEBI:15378"/>
        <dbReference type="ChEBI" id="CHEBI:28938"/>
        <dbReference type="ChEBI" id="CHEBI:30616"/>
        <dbReference type="ChEBI" id="CHEBI:37563"/>
        <dbReference type="ChEBI" id="CHEBI:43474"/>
        <dbReference type="ChEBI" id="CHEBI:46398"/>
        <dbReference type="ChEBI" id="CHEBI:456216"/>
    </reaction>
</comment>
<comment type="activity regulation">
    <text evidence="1">Allosterically activated by GTP, when glutamine is the substrate; GTP has no effect on the reaction when ammonia is the substrate. The allosteric effector GTP functions by stabilizing the protein conformation that binds the tetrahedral intermediate(s) formed during glutamine hydrolysis. Inhibited by the product CTP, via allosteric rather than competitive inhibition.</text>
</comment>
<comment type="pathway">
    <text evidence="1">Pyrimidine metabolism; CTP biosynthesis via de novo pathway; CTP from UDP: step 2/2.</text>
</comment>
<comment type="subunit">
    <text evidence="1">Homotetramer.</text>
</comment>
<comment type="miscellaneous">
    <text evidence="1">CTPSs have evolved a hybrid strategy for distinguishing between UTP and CTP. The overlapping regions of the product feedback inhibitory and substrate sites recognize a common feature in both compounds, the triphosphate moiety. To differentiate isosteric substrate and product pyrimidine rings, an additional pocket far from the expected kinase/ligase catalytic site, specifically recognizes the cytosine and ribose portions of the product inhibitor.</text>
</comment>
<comment type="similarity">
    <text evidence="1">Belongs to the CTP synthase family.</text>
</comment>
<sequence length="547" mass="61029">MARYVFITGGVVSSLGKGLASAALGALLQARGFSVRLRKLDPYLNVDPGTMSPFEHGEVFVTDDGAETDLDLGHYERFTGVSARKTDSVSSGRIYSNVLEKERRGDYLGKTIQVIPHVTNEIKDFLRVGEDEVDFMLCEIGGTVGDIEGLPFFEAIRQFAQDKPRGQCIFVHLTLLPYVSASHELKTKPTQHSVKELRSIGIAPDVLLLRSEHPIPEKEREKIALFCNVRKEAVIAAYDLKTIYEAPLAYHREGLDQAVLDAFGISPAPKPNLDRWVDVMDRLEHAEGEVRVAIVGKYTQLEDAYKSIAEALTHGGMANRTRVRAEWINAELFEREDPSPFLEGFHAILVPGGFGERGTEGKIRAAQYAREKGIPYLGICLGMQMAVIEAARNLAHVKDAGSEEFDHEIGRKRYTPVVYHLKEWIQGNHIVERKHDDDKGGTMRLGAYTAALAAGSRVATIYGSTEIEERHRHRYEVDVRYREALEGCGLTFSGMSPDGRLPEIVEIKDHPWFVGVQFHPELKSKPFAPHPLFADFIRAAVEVSRLV</sequence>
<reference key="1">
    <citation type="submission" date="2007-04" db="EMBL/GenBank/DDBJ databases">
        <title>Complete sequence of chromosome of Rhodobacter sphaeroides ATCC 17025.</title>
        <authorList>
            <consortium name="US DOE Joint Genome Institute"/>
            <person name="Copeland A."/>
            <person name="Lucas S."/>
            <person name="Lapidus A."/>
            <person name="Barry K."/>
            <person name="Detter J.C."/>
            <person name="Glavina del Rio T."/>
            <person name="Hammon N."/>
            <person name="Israni S."/>
            <person name="Dalin E."/>
            <person name="Tice H."/>
            <person name="Pitluck S."/>
            <person name="Chertkov O."/>
            <person name="Brettin T."/>
            <person name="Bruce D."/>
            <person name="Han C."/>
            <person name="Schmutz J."/>
            <person name="Larimer F."/>
            <person name="Land M."/>
            <person name="Hauser L."/>
            <person name="Kyrpides N."/>
            <person name="Kim E."/>
            <person name="Richardson P."/>
            <person name="Mackenzie C."/>
            <person name="Choudhary M."/>
            <person name="Donohue T.J."/>
            <person name="Kaplan S."/>
        </authorList>
    </citation>
    <scope>NUCLEOTIDE SEQUENCE [LARGE SCALE GENOMIC DNA]</scope>
    <source>
        <strain>ATCC 17025 / ATH 2.4.3</strain>
    </source>
</reference>
<dbReference type="EC" id="6.3.4.2" evidence="1"/>
<dbReference type="EMBL" id="CP000661">
    <property type="protein sequence ID" value="ABP69776.1"/>
    <property type="molecule type" value="Genomic_DNA"/>
</dbReference>
<dbReference type="SMR" id="A4WQW2"/>
<dbReference type="STRING" id="349102.Rsph17025_0873"/>
<dbReference type="MEROPS" id="C26.964"/>
<dbReference type="KEGG" id="rsq:Rsph17025_0873"/>
<dbReference type="eggNOG" id="COG0504">
    <property type="taxonomic scope" value="Bacteria"/>
</dbReference>
<dbReference type="HOGENOM" id="CLU_011675_5_0_5"/>
<dbReference type="BioCyc" id="RSPH349102:G1G8M-895-MONOMER"/>
<dbReference type="UniPathway" id="UPA00159">
    <property type="reaction ID" value="UER00277"/>
</dbReference>
<dbReference type="GO" id="GO:0005829">
    <property type="term" value="C:cytosol"/>
    <property type="evidence" value="ECO:0007669"/>
    <property type="project" value="TreeGrafter"/>
</dbReference>
<dbReference type="GO" id="GO:0005524">
    <property type="term" value="F:ATP binding"/>
    <property type="evidence" value="ECO:0007669"/>
    <property type="project" value="UniProtKB-KW"/>
</dbReference>
<dbReference type="GO" id="GO:0003883">
    <property type="term" value="F:CTP synthase activity"/>
    <property type="evidence" value="ECO:0007669"/>
    <property type="project" value="UniProtKB-UniRule"/>
</dbReference>
<dbReference type="GO" id="GO:0004359">
    <property type="term" value="F:glutaminase activity"/>
    <property type="evidence" value="ECO:0007669"/>
    <property type="project" value="RHEA"/>
</dbReference>
<dbReference type="GO" id="GO:0042802">
    <property type="term" value="F:identical protein binding"/>
    <property type="evidence" value="ECO:0007669"/>
    <property type="project" value="TreeGrafter"/>
</dbReference>
<dbReference type="GO" id="GO:0046872">
    <property type="term" value="F:metal ion binding"/>
    <property type="evidence" value="ECO:0007669"/>
    <property type="project" value="UniProtKB-KW"/>
</dbReference>
<dbReference type="GO" id="GO:0044210">
    <property type="term" value="P:'de novo' CTP biosynthetic process"/>
    <property type="evidence" value="ECO:0007669"/>
    <property type="project" value="UniProtKB-UniRule"/>
</dbReference>
<dbReference type="GO" id="GO:0019856">
    <property type="term" value="P:pyrimidine nucleobase biosynthetic process"/>
    <property type="evidence" value="ECO:0007669"/>
    <property type="project" value="TreeGrafter"/>
</dbReference>
<dbReference type="CDD" id="cd03113">
    <property type="entry name" value="CTPS_N"/>
    <property type="match status" value="1"/>
</dbReference>
<dbReference type="CDD" id="cd01746">
    <property type="entry name" value="GATase1_CTP_Synthase"/>
    <property type="match status" value="1"/>
</dbReference>
<dbReference type="FunFam" id="3.40.50.300:FF:000009">
    <property type="entry name" value="CTP synthase"/>
    <property type="match status" value="1"/>
</dbReference>
<dbReference type="FunFam" id="3.40.50.880:FF:000002">
    <property type="entry name" value="CTP synthase"/>
    <property type="match status" value="1"/>
</dbReference>
<dbReference type="Gene3D" id="3.40.50.880">
    <property type="match status" value="1"/>
</dbReference>
<dbReference type="Gene3D" id="3.40.50.300">
    <property type="entry name" value="P-loop containing nucleotide triphosphate hydrolases"/>
    <property type="match status" value="1"/>
</dbReference>
<dbReference type="HAMAP" id="MF_01227">
    <property type="entry name" value="PyrG"/>
    <property type="match status" value="1"/>
</dbReference>
<dbReference type="InterPro" id="IPR029062">
    <property type="entry name" value="Class_I_gatase-like"/>
</dbReference>
<dbReference type="InterPro" id="IPR004468">
    <property type="entry name" value="CTP_synthase"/>
</dbReference>
<dbReference type="InterPro" id="IPR017456">
    <property type="entry name" value="CTP_synthase_N"/>
</dbReference>
<dbReference type="InterPro" id="IPR017926">
    <property type="entry name" value="GATASE"/>
</dbReference>
<dbReference type="InterPro" id="IPR033828">
    <property type="entry name" value="GATase1_CTP_Synthase"/>
</dbReference>
<dbReference type="InterPro" id="IPR027417">
    <property type="entry name" value="P-loop_NTPase"/>
</dbReference>
<dbReference type="NCBIfam" id="NF003792">
    <property type="entry name" value="PRK05380.1"/>
    <property type="match status" value="1"/>
</dbReference>
<dbReference type="NCBIfam" id="TIGR00337">
    <property type="entry name" value="PyrG"/>
    <property type="match status" value="1"/>
</dbReference>
<dbReference type="PANTHER" id="PTHR11550">
    <property type="entry name" value="CTP SYNTHASE"/>
    <property type="match status" value="1"/>
</dbReference>
<dbReference type="PANTHER" id="PTHR11550:SF0">
    <property type="entry name" value="CTP SYNTHASE-RELATED"/>
    <property type="match status" value="1"/>
</dbReference>
<dbReference type="Pfam" id="PF06418">
    <property type="entry name" value="CTP_synth_N"/>
    <property type="match status" value="1"/>
</dbReference>
<dbReference type="Pfam" id="PF00117">
    <property type="entry name" value="GATase"/>
    <property type="match status" value="1"/>
</dbReference>
<dbReference type="SUPFAM" id="SSF52317">
    <property type="entry name" value="Class I glutamine amidotransferase-like"/>
    <property type="match status" value="1"/>
</dbReference>
<dbReference type="SUPFAM" id="SSF52540">
    <property type="entry name" value="P-loop containing nucleoside triphosphate hydrolases"/>
    <property type="match status" value="1"/>
</dbReference>
<dbReference type="PROSITE" id="PS51273">
    <property type="entry name" value="GATASE_TYPE_1"/>
    <property type="match status" value="1"/>
</dbReference>
<gene>
    <name evidence="1" type="primary">pyrG</name>
    <name type="ordered locus">Rsph17025_0873</name>
</gene>